<feature type="chain" id="PRO_0000363289" description="Probable protein phosphatase 2C 42">
    <location>
        <begin position="1"/>
        <end position="352"/>
    </location>
</feature>
<feature type="domain" description="PPM-type phosphatase" evidence="2">
    <location>
        <begin position="26"/>
        <end position="321"/>
    </location>
</feature>
<feature type="region of interest" description="Disordered" evidence="3">
    <location>
        <begin position="328"/>
        <end position="352"/>
    </location>
</feature>
<feature type="compositionally biased region" description="Low complexity" evidence="3">
    <location>
        <begin position="329"/>
        <end position="341"/>
    </location>
</feature>
<feature type="binding site" evidence="1">
    <location>
        <position position="62"/>
    </location>
    <ligand>
        <name>Mn(2+)</name>
        <dbReference type="ChEBI" id="CHEBI:29035"/>
        <label>1</label>
    </ligand>
</feature>
<feature type="binding site" evidence="1">
    <location>
        <position position="62"/>
    </location>
    <ligand>
        <name>Mn(2+)</name>
        <dbReference type="ChEBI" id="CHEBI:29035"/>
        <label>2</label>
    </ligand>
</feature>
<feature type="binding site" evidence="1">
    <location>
        <position position="63"/>
    </location>
    <ligand>
        <name>Mn(2+)</name>
        <dbReference type="ChEBI" id="CHEBI:29035"/>
        <label>1</label>
    </ligand>
</feature>
<feature type="binding site" evidence="1">
    <location>
        <position position="267"/>
    </location>
    <ligand>
        <name>Mn(2+)</name>
        <dbReference type="ChEBI" id="CHEBI:29035"/>
        <label>2</label>
    </ligand>
</feature>
<feature type="binding site" evidence="1">
    <location>
        <position position="312"/>
    </location>
    <ligand>
        <name>Mn(2+)</name>
        <dbReference type="ChEBI" id="CHEBI:29035"/>
        <label>2</label>
    </ligand>
</feature>
<organism>
    <name type="scientific">Oryza sativa subsp. japonica</name>
    <name type="common">Rice</name>
    <dbReference type="NCBI Taxonomy" id="39947"/>
    <lineage>
        <taxon>Eukaryota</taxon>
        <taxon>Viridiplantae</taxon>
        <taxon>Streptophyta</taxon>
        <taxon>Embryophyta</taxon>
        <taxon>Tracheophyta</taxon>
        <taxon>Spermatophyta</taxon>
        <taxon>Magnoliopsida</taxon>
        <taxon>Liliopsida</taxon>
        <taxon>Poales</taxon>
        <taxon>Poaceae</taxon>
        <taxon>BOP clade</taxon>
        <taxon>Oryzoideae</taxon>
        <taxon>Oryzeae</taxon>
        <taxon>Oryzinae</taxon>
        <taxon>Oryza</taxon>
        <taxon>Oryza sativa</taxon>
    </lineage>
</organism>
<accession>Q7XU84</accession>
<accession>A3AVA7</accession>
<accession>C7J1T0</accession>
<protein>
    <recommendedName>
        <fullName>Probable protein phosphatase 2C 42</fullName>
        <shortName>OsPP2C42</shortName>
        <ecNumber>3.1.3.16</ecNumber>
    </recommendedName>
</protein>
<reference key="1">
    <citation type="journal article" date="2002" name="Nature">
        <title>Sequence and analysis of rice chromosome 4.</title>
        <authorList>
            <person name="Feng Q."/>
            <person name="Zhang Y."/>
            <person name="Hao P."/>
            <person name="Wang S."/>
            <person name="Fu G."/>
            <person name="Huang Y."/>
            <person name="Li Y."/>
            <person name="Zhu J."/>
            <person name="Liu Y."/>
            <person name="Hu X."/>
            <person name="Jia P."/>
            <person name="Zhang Y."/>
            <person name="Zhao Q."/>
            <person name="Ying K."/>
            <person name="Yu S."/>
            <person name="Tang Y."/>
            <person name="Weng Q."/>
            <person name="Zhang L."/>
            <person name="Lu Y."/>
            <person name="Mu J."/>
            <person name="Lu Y."/>
            <person name="Zhang L.S."/>
            <person name="Yu Z."/>
            <person name="Fan D."/>
            <person name="Liu X."/>
            <person name="Lu T."/>
            <person name="Li C."/>
            <person name="Wu Y."/>
            <person name="Sun T."/>
            <person name="Lei H."/>
            <person name="Li T."/>
            <person name="Hu H."/>
            <person name="Guan J."/>
            <person name="Wu M."/>
            <person name="Zhang R."/>
            <person name="Zhou B."/>
            <person name="Chen Z."/>
            <person name="Chen L."/>
            <person name="Jin Z."/>
            <person name="Wang R."/>
            <person name="Yin H."/>
            <person name="Cai Z."/>
            <person name="Ren S."/>
            <person name="Lv G."/>
            <person name="Gu W."/>
            <person name="Zhu G."/>
            <person name="Tu Y."/>
            <person name="Jia J."/>
            <person name="Zhang Y."/>
            <person name="Chen J."/>
            <person name="Kang H."/>
            <person name="Chen X."/>
            <person name="Shao C."/>
            <person name="Sun Y."/>
            <person name="Hu Q."/>
            <person name="Zhang X."/>
            <person name="Zhang W."/>
            <person name="Wang L."/>
            <person name="Ding C."/>
            <person name="Sheng H."/>
            <person name="Gu J."/>
            <person name="Chen S."/>
            <person name="Ni L."/>
            <person name="Zhu F."/>
            <person name="Chen W."/>
            <person name="Lan L."/>
            <person name="Lai Y."/>
            <person name="Cheng Z."/>
            <person name="Gu M."/>
            <person name="Jiang J."/>
            <person name="Li J."/>
            <person name="Hong G."/>
            <person name="Xue Y."/>
            <person name="Han B."/>
        </authorList>
    </citation>
    <scope>NUCLEOTIDE SEQUENCE [LARGE SCALE GENOMIC DNA]</scope>
    <source>
        <strain>cv. Nipponbare</strain>
    </source>
</reference>
<reference key="2">
    <citation type="journal article" date="2005" name="Nature">
        <title>The map-based sequence of the rice genome.</title>
        <authorList>
            <consortium name="International rice genome sequencing project (IRGSP)"/>
        </authorList>
    </citation>
    <scope>NUCLEOTIDE SEQUENCE [LARGE SCALE GENOMIC DNA]</scope>
    <source>
        <strain>cv. Nipponbare</strain>
    </source>
</reference>
<reference key="3">
    <citation type="journal article" date="2008" name="Nucleic Acids Res.">
        <title>The rice annotation project database (RAP-DB): 2008 update.</title>
        <authorList>
            <consortium name="The rice annotation project (RAP)"/>
        </authorList>
    </citation>
    <scope>GENOME REANNOTATION</scope>
    <source>
        <strain>cv. Nipponbare</strain>
    </source>
</reference>
<reference key="4">
    <citation type="journal article" date="2013" name="Rice">
        <title>Improvement of the Oryza sativa Nipponbare reference genome using next generation sequence and optical map data.</title>
        <authorList>
            <person name="Kawahara Y."/>
            <person name="de la Bastide M."/>
            <person name="Hamilton J.P."/>
            <person name="Kanamori H."/>
            <person name="McCombie W.R."/>
            <person name="Ouyang S."/>
            <person name="Schwartz D.C."/>
            <person name="Tanaka T."/>
            <person name="Wu J."/>
            <person name="Zhou S."/>
            <person name="Childs K.L."/>
            <person name="Davidson R.M."/>
            <person name="Lin H."/>
            <person name="Quesada-Ocampo L."/>
            <person name="Vaillancourt B."/>
            <person name="Sakai H."/>
            <person name="Lee S.S."/>
            <person name="Kim J."/>
            <person name="Numa H."/>
            <person name="Itoh T."/>
            <person name="Buell C.R."/>
            <person name="Matsumoto T."/>
        </authorList>
    </citation>
    <scope>GENOME REANNOTATION</scope>
    <source>
        <strain>cv. Nipponbare</strain>
    </source>
</reference>
<reference key="5">
    <citation type="journal article" date="2005" name="PLoS Biol.">
        <title>The genomes of Oryza sativa: a history of duplications.</title>
        <authorList>
            <person name="Yu J."/>
            <person name="Wang J."/>
            <person name="Lin W."/>
            <person name="Li S."/>
            <person name="Li H."/>
            <person name="Zhou J."/>
            <person name="Ni P."/>
            <person name="Dong W."/>
            <person name="Hu S."/>
            <person name="Zeng C."/>
            <person name="Zhang J."/>
            <person name="Zhang Y."/>
            <person name="Li R."/>
            <person name="Xu Z."/>
            <person name="Li S."/>
            <person name="Li X."/>
            <person name="Zheng H."/>
            <person name="Cong L."/>
            <person name="Lin L."/>
            <person name="Yin J."/>
            <person name="Geng J."/>
            <person name="Li G."/>
            <person name="Shi J."/>
            <person name="Liu J."/>
            <person name="Lv H."/>
            <person name="Li J."/>
            <person name="Wang J."/>
            <person name="Deng Y."/>
            <person name="Ran L."/>
            <person name="Shi X."/>
            <person name="Wang X."/>
            <person name="Wu Q."/>
            <person name="Li C."/>
            <person name="Ren X."/>
            <person name="Wang J."/>
            <person name="Wang X."/>
            <person name="Li D."/>
            <person name="Liu D."/>
            <person name="Zhang X."/>
            <person name="Ji Z."/>
            <person name="Zhao W."/>
            <person name="Sun Y."/>
            <person name="Zhang Z."/>
            <person name="Bao J."/>
            <person name="Han Y."/>
            <person name="Dong L."/>
            <person name="Ji J."/>
            <person name="Chen P."/>
            <person name="Wu S."/>
            <person name="Liu J."/>
            <person name="Xiao Y."/>
            <person name="Bu D."/>
            <person name="Tan J."/>
            <person name="Yang L."/>
            <person name="Ye C."/>
            <person name="Zhang J."/>
            <person name="Xu J."/>
            <person name="Zhou Y."/>
            <person name="Yu Y."/>
            <person name="Zhang B."/>
            <person name="Zhuang S."/>
            <person name="Wei H."/>
            <person name="Liu B."/>
            <person name="Lei M."/>
            <person name="Yu H."/>
            <person name="Li Y."/>
            <person name="Xu H."/>
            <person name="Wei S."/>
            <person name="He X."/>
            <person name="Fang L."/>
            <person name="Zhang Z."/>
            <person name="Zhang Y."/>
            <person name="Huang X."/>
            <person name="Su Z."/>
            <person name="Tong W."/>
            <person name="Li J."/>
            <person name="Tong Z."/>
            <person name="Li S."/>
            <person name="Ye J."/>
            <person name="Wang L."/>
            <person name="Fang L."/>
            <person name="Lei T."/>
            <person name="Chen C.-S."/>
            <person name="Chen H.-C."/>
            <person name="Xu Z."/>
            <person name="Li H."/>
            <person name="Huang H."/>
            <person name="Zhang F."/>
            <person name="Xu H."/>
            <person name="Li N."/>
            <person name="Zhao C."/>
            <person name="Li S."/>
            <person name="Dong L."/>
            <person name="Huang Y."/>
            <person name="Li L."/>
            <person name="Xi Y."/>
            <person name="Qi Q."/>
            <person name="Li W."/>
            <person name="Zhang B."/>
            <person name="Hu W."/>
            <person name="Zhang Y."/>
            <person name="Tian X."/>
            <person name="Jiao Y."/>
            <person name="Liang X."/>
            <person name="Jin J."/>
            <person name="Gao L."/>
            <person name="Zheng W."/>
            <person name="Hao B."/>
            <person name="Liu S.-M."/>
            <person name="Wang W."/>
            <person name="Yuan L."/>
            <person name="Cao M."/>
            <person name="McDermott J."/>
            <person name="Samudrala R."/>
            <person name="Wang J."/>
            <person name="Wong G.K.-S."/>
            <person name="Yang H."/>
        </authorList>
    </citation>
    <scope>NUCLEOTIDE SEQUENCE [LARGE SCALE GENOMIC DNA]</scope>
    <source>
        <strain>cv. Nipponbare</strain>
    </source>
</reference>
<reference key="6">
    <citation type="journal article" date="2008" name="BMC Genomics">
        <title>Genome-wide and expression analysis of protein phosphatase 2C in rice and Arabidopsis.</title>
        <authorList>
            <person name="Xue T."/>
            <person name="Wang D."/>
            <person name="Zhang S."/>
            <person name="Ehlting J."/>
            <person name="Ni F."/>
            <person name="Jacab S."/>
            <person name="Zheng C."/>
            <person name="Zhong Y."/>
        </authorList>
    </citation>
    <scope>GENE FAMILY</scope>
    <scope>NOMENCLATURE</scope>
</reference>
<dbReference type="EC" id="3.1.3.16"/>
<dbReference type="EMBL" id="AL606594">
    <property type="protein sequence ID" value="CAD41496.3"/>
    <property type="status" value="ALT_SEQ"/>
    <property type="molecule type" value="Genomic_DNA"/>
</dbReference>
<dbReference type="EMBL" id="AP008210">
    <property type="protein sequence ID" value="BAH92731.1"/>
    <property type="status" value="ALT_SEQ"/>
    <property type="molecule type" value="Genomic_DNA"/>
</dbReference>
<dbReference type="EMBL" id="AP014960">
    <property type="status" value="NOT_ANNOTATED_CDS"/>
    <property type="molecule type" value="Genomic_DNA"/>
</dbReference>
<dbReference type="EMBL" id="CM000141">
    <property type="status" value="NOT_ANNOTATED_CDS"/>
    <property type="molecule type" value="Genomic_DNA"/>
</dbReference>
<dbReference type="SMR" id="Q7XU84"/>
<dbReference type="FunCoup" id="Q7XU84">
    <property type="interactions" value="153"/>
</dbReference>
<dbReference type="STRING" id="39947.Q7XU84"/>
<dbReference type="PaxDb" id="39947-Q7XU84"/>
<dbReference type="KEGG" id="dosa:Os04g0500900"/>
<dbReference type="KEGG" id="osa:9269012"/>
<dbReference type="eggNOG" id="KOG0698">
    <property type="taxonomic scope" value="Eukaryota"/>
</dbReference>
<dbReference type="HOGENOM" id="CLU_013173_4_1_1"/>
<dbReference type="InParanoid" id="Q7XU84"/>
<dbReference type="OrthoDB" id="614159at2759"/>
<dbReference type="Proteomes" id="UP000000763">
    <property type="component" value="Chromosome 4"/>
</dbReference>
<dbReference type="Proteomes" id="UP000007752">
    <property type="component" value="Chromosome 4"/>
</dbReference>
<dbReference type="Proteomes" id="UP000059680">
    <property type="component" value="Chromosome 4"/>
</dbReference>
<dbReference type="GO" id="GO:0046872">
    <property type="term" value="F:metal ion binding"/>
    <property type="evidence" value="ECO:0007669"/>
    <property type="project" value="UniProtKB-KW"/>
</dbReference>
<dbReference type="GO" id="GO:0004722">
    <property type="term" value="F:protein serine/threonine phosphatase activity"/>
    <property type="evidence" value="ECO:0007669"/>
    <property type="project" value="UniProtKB-EC"/>
</dbReference>
<dbReference type="GO" id="GO:0007165">
    <property type="term" value="P:signal transduction"/>
    <property type="evidence" value="ECO:0000318"/>
    <property type="project" value="GO_Central"/>
</dbReference>
<dbReference type="CDD" id="cd00143">
    <property type="entry name" value="PP2Cc"/>
    <property type="match status" value="1"/>
</dbReference>
<dbReference type="Gene3D" id="3.60.40.10">
    <property type="entry name" value="PPM-type phosphatase domain"/>
    <property type="match status" value="1"/>
</dbReference>
<dbReference type="InterPro" id="IPR015655">
    <property type="entry name" value="PP2C"/>
</dbReference>
<dbReference type="InterPro" id="IPR000222">
    <property type="entry name" value="PP2C_BS"/>
</dbReference>
<dbReference type="InterPro" id="IPR036457">
    <property type="entry name" value="PPM-type-like_dom_sf"/>
</dbReference>
<dbReference type="InterPro" id="IPR001932">
    <property type="entry name" value="PPM-type_phosphatase-like_dom"/>
</dbReference>
<dbReference type="PANTHER" id="PTHR13832">
    <property type="entry name" value="PROTEIN PHOSPHATASE 2C"/>
    <property type="match status" value="1"/>
</dbReference>
<dbReference type="PANTHER" id="PTHR13832:SF760">
    <property type="entry name" value="PROTEIN PHOSPHATASE 2C 42-RELATED"/>
    <property type="match status" value="1"/>
</dbReference>
<dbReference type="Pfam" id="PF00481">
    <property type="entry name" value="PP2C"/>
    <property type="match status" value="2"/>
</dbReference>
<dbReference type="SMART" id="SM00332">
    <property type="entry name" value="PP2Cc"/>
    <property type="match status" value="1"/>
</dbReference>
<dbReference type="SUPFAM" id="SSF81606">
    <property type="entry name" value="PP2C-like"/>
    <property type="match status" value="1"/>
</dbReference>
<dbReference type="PROSITE" id="PS01032">
    <property type="entry name" value="PPM_1"/>
    <property type="match status" value="1"/>
</dbReference>
<dbReference type="PROSITE" id="PS51746">
    <property type="entry name" value="PPM_2"/>
    <property type="match status" value="1"/>
</dbReference>
<name>P2C42_ORYSJ</name>
<evidence type="ECO:0000250" key="1"/>
<evidence type="ECO:0000255" key="2">
    <source>
        <dbReference type="PROSITE-ProRule" id="PRU01082"/>
    </source>
</evidence>
<evidence type="ECO:0000256" key="3">
    <source>
        <dbReference type="SAM" id="MobiDB-lite"/>
    </source>
</evidence>
<evidence type="ECO:0000305" key="4"/>
<gene>
    <name type="ordered locus">Os04g0500900</name>
    <name type="ordered locus">LOC_Os04g42260</name>
    <name type="ORF">OSJNBa0029H02.20</name>
</gene>
<sequence>MAQPQRPLQVPDITKSTHSGGNTVLAYASSAMQGYRSTMEDAHATIENLDALTNTSFFGVYDGHGGSAVARYCANHLHNKVLEQEDFSSNLANALRQSFFRMDEMLRNQAASKELTEYGSGNEYWRTAGRSWLRCAPCVLGPVYCGPLAEGCTACVVLIRNTQIVVGNAGDARCVISRNGQAIALSNDHKPNFPEETQRIVAAGGSVSFSRGSHRVNNGIAVSRAIGDLSYKNNKKLRPEQQLLTCSPEIRADQLTDDTEFLVIACDGVWDVLANQAVVDFVRLHLNNGVELSVICESLLQEAITRDPPSTDNMSVILVRFLHPEGNRGARAATSSTSTGTVPSRHSKSISL</sequence>
<proteinExistence type="inferred from homology"/>
<comment type="catalytic activity">
    <reaction>
        <text>O-phospho-L-seryl-[protein] + H2O = L-seryl-[protein] + phosphate</text>
        <dbReference type="Rhea" id="RHEA:20629"/>
        <dbReference type="Rhea" id="RHEA-COMP:9863"/>
        <dbReference type="Rhea" id="RHEA-COMP:11604"/>
        <dbReference type="ChEBI" id="CHEBI:15377"/>
        <dbReference type="ChEBI" id="CHEBI:29999"/>
        <dbReference type="ChEBI" id="CHEBI:43474"/>
        <dbReference type="ChEBI" id="CHEBI:83421"/>
        <dbReference type="EC" id="3.1.3.16"/>
    </reaction>
</comment>
<comment type="catalytic activity">
    <reaction>
        <text>O-phospho-L-threonyl-[protein] + H2O = L-threonyl-[protein] + phosphate</text>
        <dbReference type="Rhea" id="RHEA:47004"/>
        <dbReference type="Rhea" id="RHEA-COMP:11060"/>
        <dbReference type="Rhea" id="RHEA-COMP:11605"/>
        <dbReference type="ChEBI" id="CHEBI:15377"/>
        <dbReference type="ChEBI" id="CHEBI:30013"/>
        <dbReference type="ChEBI" id="CHEBI:43474"/>
        <dbReference type="ChEBI" id="CHEBI:61977"/>
        <dbReference type="EC" id="3.1.3.16"/>
    </reaction>
</comment>
<comment type="cofactor">
    <cofactor evidence="1">
        <name>Mg(2+)</name>
        <dbReference type="ChEBI" id="CHEBI:18420"/>
    </cofactor>
    <cofactor evidence="1">
        <name>Mn(2+)</name>
        <dbReference type="ChEBI" id="CHEBI:29035"/>
    </cofactor>
    <text evidence="1">Binds 2 magnesium or manganese ions per subunit.</text>
</comment>
<comment type="similarity">
    <text evidence="4">Belongs to the PP2C family.</text>
</comment>
<comment type="sequence caution" evidence="4">
    <conflict type="erroneous gene model prediction">
        <sequence resource="EMBL-CDS" id="BAH92731"/>
    </conflict>
</comment>
<comment type="sequence caution" evidence="4">
    <conflict type="erroneous gene model prediction">
        <sequence resource="EMBL-CDS" id="CAD41496"/>
    </conflict>
</comment>
<keyword id="KW-0378">Hydrolase</keyword>
<keyword id="KW-0460">Magnesium</keyword>
<keyword id="KW-0464">Manganese</keyword>
<keyword id="KW-0479">Metal-binding</keyword>
<keyword id="KW-0904">Protein phosphatase</keyword>
<keyword id="KW-1185">Reference proteome</keyword>